<accession>P09475</accession>
<proteinExistence type="evidence at protein level"/>
<keyword id="KW-0165">Cleavage on pair of basic residues</keyword>
<keyword id="KW-0903">Direct protein sequencing</keyword>
<keyword id="KW-0372">Hormone</keyword>
<keyword id="KW-0964">Secreted</keyword>
<feature type="peptide" id="PRO_0000025378" description="Pancreatic polypeptide YG">
    <location>
        <begin position="1"/>
        <end position="37"/>
    </location>
</feature>
<feature type="peptide" id="PRO_0000025379" description="Carboxy-terminal peptide">
    <location>
        <begin position="40"/>
        <end position="69"/>
    </location>
</feature>
<feature type="non-terminal residue">
    <location>
        <position position="1"/>
    </location>
</feature>
<feature type="non-terminal residue">
    <location>
        <position position="69"/>
    </location>
</feature>
<organism>
    <name type="scientific">Lophius americanus</name>
    <name type="common">American angler</name>
    <name type="synonym">Anglerfish</name>
    <dbReference type="NCBI Taxonomy" id="8073"/>
    <lineage>
        <taxon>Eukaryota</taxon>
        <taxon>Metazoa</taxon>
        <taxon>Chordata</taxon>
        <taxon>Craniata</taxon>
        <taxon>Vertebrata</taxon>
        <taxon>Euteleostomi</taxon>
        <taxon>Actinopterygii</taxon>
        <taxon>Neopterygii</taxon>
        <taxon>Teleostei</taxon>
        <taxon>Neoteleostei</taxon>
        <taxon>Acanthomorphata</taxon>
        <taxon>Eupercaria</taxon>
        <taxon>Lophiiformes</taxon>
        <taxon>Lophiidae</taxon>
        <taxon>Lophius</taxon>
    </lineage>
</organism>
<name>PPY_LOPAM</name>
<evidence type="ECO:0000305" key="1"/>
<reference key="1">
    <citation type="journal article" date="1985" name="Endocrinology">
        <title>A nonamidated peptide homologous to porcine peptide YY and neuropeptide YY.</title>
        <authorList>
            <person name="Andrews P.C."/>
            <person name="Hawke D."/>
            <person name="Shively J.E."/>
            <person name="Dixon J.E."/>
        </authorList>
    </citation>
    <scope>PROTEIN SEQUENCE OF 1-37</scope>
    <source>
        <tissue>Pancreas</tissue>
    </source>
</reference>
<reference key="2">
    <citation type="journal article" date="1986" name="Peptides">
        <title>Anglerfish islets contain NPY immunoreactive nerves and produce the NPY analog aPY.</title>
        <authorList>
            <person name="Noe B.D."/>
            <person name="McDonald J.K."/>
            <person name="Greiner F."/>
            <person name="Wood J.G."/>
            <person name="Andrews P.C."/>
        </authorList>
    </citation>
    <scope>PROTEIN SEQUENCE OF 1-37</scope>
</reference>
<reference key="3">
    <citation type="journal article" date="1986" name="J. Biol. Chem.">
        <title>Isolation and structure of the second of two major peptide products from the precursor to an anglerfish peptide homologous to neuropeptide Y.</title>
        <authorList>
            <person name="Andrews P.C."/>
            <person name="Dixon J.E."/>
        </authorList>
    </citation>
    <scope>PROTEIN SEQUENCE OF 40-69</scope>
    <source>
        <tissue>Pancreas</tissue>
    </source>
</reference>
<dbReference type="PIR" id="A25497">
    <property type="entry name" value="A25497"/>
</dbReference>
<dbReference type="PIR" id="A26781">
    <property type="entry name" value="A26781"/>
</dbReference>
<dbReference type="GO" id="GO:0005615">
    <property type="term" value="C:extracellular space"/>
    <property type="evidence" value="ECO:0007669"/>
    <property type="project" value="TreeGrafter"/>
</dbReference>
<dbReference type="GO" id="GO:0005184">
    <property type="term" value="F:neuropeptide hormone activity"/>
    <property type="evidence" value="ECO:0007669"/>
    <property type="project" value="TreeGrafter"/>
</dbReference>
<dbReference type="GO" id="GO:0031841">
    <property type="term" value="F:neuropeptide Y receptor binding"/>
    <property type="evidence" value="ECO:0007669"/>
    <property type="project" value="TreeGrafter"/>
</dbReference>
<dbReference type="GO" id="GO:0007631">
    <property type="term" value="P:feeding behavior"/>
    <property type="evidence" value="ECO:0007669"/>
    <property type="project" value="TreeGrafter"/>
</dbReference>
<dbReference type="GO" id="GO:0007218">
    <property type="term" value="P:neuropeptide signaling pathway"/>
    <property type="evidence" value="ECO:0007669"/>
    <property type="project" value="TreeGrafter"/>
</dbReference>
<dbReference type="CDD" id="cd00126">
    <property type="entry name" value="PAH"/>
    <property type="match status" value="1"/>
</dbReference>
<dbReference type="Gene3D" id="6.10.250.900">
    <property type="match status" value="1"/>
</dbReference>
<dbReference type="InterPro" id="IPR001955">
    <property type="entry name" value="Pancreatic_hormone-like"/>
</dbReference>
<dbReference type="InterPro" id="IPR020392">
    <property type="entry name" value="Pancreatic_hormone-like_CS"/>
</dbReference>
<dbReference type="PANTHER" id="PTHR10533">
    <property type="entry name" value="NEUROPEPTIDE Y/PANCREATIC HORMONE/PEPTIDE YY"/>
    <property type="match status" value="1"/>
</dbReference>
<dbReference type="PANTHER" id="PTHR10533:SF14">
    <property type="entry name" value="PEPTIDE YY-RELATED"/>
    <property type="match status" value="1"/>
</dbReference>
<dbReference type="Pfam" id="PF00159">
    <property type="entry name" value="Hormone_3"/>
    <property type="match status" value="1"/>
</dbReference>
<dbReference type="PRINTS" id="PR00278">
    <property type="entry name" value="PANCHORMONE"/>
</dbReference>
<dbReference type="SMART" id="SM00309">
    <property type="entry name" value="PAH"/>
    <property type="match status" value="1"/>
</dbReference>
<dbReference type="PROSITE" id="PS00265">
    <property type="entry name" value="PANCREATIC_HORMONE_1"/>
    <property type="match status" value="1"/>
</dbReference>
<dbReference type="PROSITE" id="PS50276">
    <property type="entry name" value="PANCREATIC_HORMONE_2"/>
    <property type="match status" value="1"/>
</dbReference>
<protein>
    <recommendedName>
        <fullName>Pancreatic propolypeptide YG</fullName>
        <shortName>APY</shortName>
    </recommendedName>
    <component>
        <recommendedName>
            <fullName>Pancreatic polypeptide YG</fullName>
        </recommendedName>
    </component>
    <component>
        <recommendedName>
            <fullName>Carboxy-terminal peptide</fullName>
        </recommendedName>
    </component>
</protein>
<sequence>YPPKPETPGSNASPEDWASYQAAVRHYVNLITRQRYGXXSSPEEAVAWLLFKADPSQDIEPRLDDDNAW</sequence>
<comment type="subcellular location">
    <subcellularLocation>
        <location>Secreted</location>
    </subcellularLocation>
</comment>
<comment type="miscellaneous">
    <text>X's at positions 38 to 39 were included by homology with other pancreatic hormone type precursor sequence.</text>
</comment>
<comment type="similarity">
    <text evidence="1">Belongs to the NPY family.</text>
</comment>